<protein>
    <recommendedName>
        <fullName evidence="3">Protein BIG GRAIN 1-like A</fullName>
    </recommendedName>
</protein>
<organism evidence="6">
    <name type="scientific">Arabidopsis thaliana</name>
    <name type="common">Mouse-ear cress</name>
    <dbReference type="NCBI Taxonomy" id="3702"/>
    <lineage>
        <taxon>Eukaryota</taxon>
        <taxon>Viridiplantae</taxon>
        <taxon>Streptophyta</taxon>
        <taxon>Embryophyta</taxon>
        <taxon>Tracheophyta</taxon>
        <taxon>Spermatophyta</taxon>
        <taxon>Magnoliopsida</taxon>
        <taxon>eudicotyledons</taxon>
        <taxon>Gunneridae</taxon>
        <taxon>Pentapetalae</taxon>
        <taxon>rosids</taxon>
        <taxon>malvids</taxon>
        <taxon>Brassicales</taxon>
        <taxon>Brassicaceae</taxon>
        <taxon>Camelineae</taxon>
        <taxon>Arabidopsis</taxon>
    </lineage>
</organism>
<comment type="function">
    <text evidence="1">Involved in auxin transport. Regulator of the auxin signaling pathway.</text>
</comment>
<comment type="subcellular location">
    <subcellularLocation>
        <location evidence="1">Cell membrane</location>
    </subcellularLocation>
</comment>
<comment type="similarity">
    <text evidence="3">Belongs to the BIG GRAIN 1 (BG1) plant protein family.</text>
</comment>
<accession>Q9LVK2</accession>
<evidence type="ECO:0000250" key="1">
    <source>
        <dbReference type="UniProtKB" id="Q10R09"/>
    </source>
</evidence>
<evidence type="ECO:0000256" key="2">
    <source>
        <dbReference type="SAM" id="MobiDB-lite"/>
    </source>
</evidence>
<evidence type="ECO:0000305" key="3"/>
<evidence type="ECO:0000312" key="4">
    <source>
        <dbReference type="EMBL" id="AEE75447.1"/>
    </source>
</evidence>
<evidence type="ECO:0000312" key="5">
    <source>
        <dbReference type="EMBL" id="BAB02328.1"/>
    </source>
</evidence>
<evidence type="ECO:0000312" key="6">
    <source>
        <dbReference type="Proteomes" id="UP000006548"/>
    </source>
</evidence>
<keyword id="KW-0927">Auxin signaling pathway</keyword>
<keyword id="KW-1003">Cell membrane</keyword>
<keyword id="KW-0472">Membrane</keyword>
<keyword id="KW-1185">Reference proteome</keyword>
<keyword id="KW-0813">Transport</keyword>
<dbReference type="EMBL" id="AB019229">
    <property type="protein sequence ID" value="BAB02328.1"/>
    <property type="molecule type" value="Genomic_DNA"/>
</dbReference>
<dbReference type="EMBL" id="CP002686">
    <property type="protein sequence ID" value="AEE75447.1"/>
    <property type="molecule type" value="Genomic_DNA"/>
</dbReference>
<dbReference type="RefSeq" id="NP_188014.1">
    <property type="nucleotide sequence ID" value="NM_112252.3"/>
</dbReference>
<dbReference type="SMR" id="Q9LVK2"/>
<dbReference type="FunCoup" id="Q9LVK2">
    <property type="interactions" value="90"/>
</dbReference>
<dbReference type="STRING" id="3702.Q9LVK2"/>
<dbReference type="PaxDb" id="3702-AT3G13980.1"/>
<dbReference type="ProteomicsDB" id="240694"/>
<dbReference type="EnsemblPlants" id="AT3G13980.1">
    <property type="protein sequence ID" value="AT3G13980.1"/>
    <property type="gene ID" value="AT3G13980"/>
</dbReference>
<dbReference type="GeneID" id="820612"/>
<dbReference type="Gramene" id="AT3G13980.1">
    <property type="protein sequence ID" value="AT3G13980.1"/>
    <property type="gene ID" value="AT3G13980"/>
</dbReference>
<dbReference type="KEGG" id="ath:AT3G13980"/>
<dbReference type="Araport" id="AT3G13980"/>
<dbReference type="TAIR" id="AT3G13980">
    <property type="gene designation" value="BG4"/>
</dbReference>
<dbReference type="eggNOG" id="ENOG502QWFY">
    <property type="taxonomic scope" value="Eukaryota"/>
</dbReference>
<dbReference type="HOGENOM" id="CLU_048356_1_0_1"/>
<dbReference type="InParanoid" id="Q9LVK2"/>
<dbReference type="OMA" id="SFQRACM"/>
<dbReference type="OrthoDB" id="680041at2759"/>
<dbReference type="PhylomeDB" id="Q9LVK2"/>
<dbReference type="PRO" id="PR:Q9LVK2"/>
<dbReference type="Proteomes" id="UP000006548">
    <property type="component" value="Chromosome 3"/>
</dbReference>
<dbReference type="ExpressionAtlas" id="Q9LVK2">
    <property type="expression patterns" value="baseline and differential"/>
</dbReference>
<dbReference type="GO" id="GO:0005886">
    <property type="term" value="C:plasma membrane"/>
    <property type="evidence" value="ECO:0000250"/>
    <property type="project" value="UniProtKB"/>
</dbReference>
<dbReference type="GO" id="GO:0060918">
    <property type="term" value="P:auxin transport"/>
    <property type="evidence" value="ECO:0000250"/>
    <property type="project" value="UniProtKB"/>
</dbReference>
<dbReference type="GO" id="GO:0009734">
    <property type="term" value="P:auxin-activated signaling pathway"/>
    <property type="evidence" value="ECO:0007669"/>
    <property type="project" value="UniProtKB-KW"/>
</dbReference>
<dbReference type="GO" id="GO:0010929">
    <property type="term" value="P:positive regulation of auxin mediated signaling pathway"/>
    <property type="evidence" value="ECO:0000250"/>
    <property type="project" value="UniProtKB"/>
</dbReference>
<dbReference type="InterPro" id="IPR039621">
    <property type="entry name" value="BG1-like"/>
</dbReference>
<dbReference type="PANTHER" id="PTHR33541:SF28">
    <property type="entry name" value="PROTEIN BIG GRAIN 1-LIKE A"/>
    <property type="match status" value="1"/>
</dbReference>
<dbReference type="PANTHER" id="PTHR33541">
    <property type="entry name" value="PROTEIN BIG GRAIN 1-LIKE A-RELATED"/>
    <property type="match status" value="1"/>
</dbReference>
<feature type="chain" id="PRO_0000434444" description="Protein BIG GRAIN 1-like A">
    <location>
        <begin position="1"/>
        <end position="357"/>
    </location>
</feature>
<feature type="region of interest" description="Disordered" evidence="2">
    <location>
        <begin position="1"/>
        <end position="146"/>
    </location>
</feature>
<feature type="region of interest" description="Disordered" evidence="2">
    <location>
        <begin position="208"/>
        <end position="233"/>
    </location>
</feature>
<feature type="compositionally biased region" description="Basic and acidic residues" evidence="2">
    <location>
        <begin position="75"/>
        <end position="87"/>
    </location>
</feature>
<feature type="compositionally biased region" description="Low complexity" evidence="2">
    <location>
        <begin position="88"/>
        <end position="104"/>
    </location>
</feature>
<feature type="compositionally biased region" description="Low complexity" evidence="2">
    <location>
        <begin position="112"/>
        <end position="127"/>
    </location>
</feature>
<feature type="compositionally biased region" description="Polar residues" evidence="2">
    <location>
        <begin position="129"/>
        <end position="139"/>
    </location>
</feature>
<feature type="compositionally biased region" description="Low complexity" evidence="2">
    <location>
        <begin position="208"/>
        <end position="223"/>
    </location>
</feature>
<name>BIG1A_ARATH</name>
<reference key="1">
    <citation type="journal article" date="2000" name="DNA Res.">
        <title>Structural analysis of Arabidopsis thaliana chromosome 3. I. Sequence features of the regions of 4,504,864 bp covered by sixty P1 and TAC clones.</title>
        <authorList>
            <person name="Sato S."/>
            <person name="Nakamura Y."/>
            <person name="Kaneko T."/>
            <person name="Katoh T."/>
            <person name="Asamizu E."/>
            <person name="Tabata S."/>
        </authorList>
    </citation>
    <scope>NUCLEOTIDE SEQUENCE [LARGE SCALE GENOMIC DNA]</scope>
    <source>
        <strain>cv. Columbia</strain>
    </source>
</reference>
<reference key="2">
    <citation type="journal article" date="2017" name="Plant J.">
        <title>Araport11: a complete reannotation of the Arabidopsis thaliana reference genome.</title>
        <authorList>
            <person name="Cheng C.Y."/>
            <person name="Krishnakumar V."/>
            <person name="Chan A.P."/>
            <person name="Thibaud-Nissen F."/>
            <person name="Schobel S."/>
            <person name="Town C.D."/>
        </authorList>
    </citation>
    <scope>GENOME REANNOTATION</scope>
    <source>
        <strain>cv. Columbia</strain>
    </source>
</reference>
<proteinExistence type="inferred from homology"/>
<sequence>MEITWEKPKSSSHHRNPSFSSTLLDQIYRSIDDSSPPPPLESIKKKKHHHQQRNASLHEDREISPIYHRRSIAADFERSRRKTDFLRHSNSSSSDSSGFSSSESDSFHGRSKSSASPPSSSRQQPKPIRTSSVDHSSAVQKPKELGGFLRTKSKALKIYSDLKKVKQPISPGGRLATFLNSLFTNAATNPKKHKKTTTVAVVEEPHSSSTCSSASSFSRSCLSKTPSSSGKSKRSVRFCPVNVILDEDSSFTMPYAYNNERLYDNNEAKRVEEHRRVIQAAKDLLRTYHNKNKVTTTNINNVEEDDEDDAASCASSDLFELENLSAIGIERYREELPVYETTRLDNMNRVIATGLIV</sequence>
<gene>
    <name evidence="4" type="ordered locus">At3g13980</name>
    <name evidence="5" type="ORF">MDC16.10</name>
</gene>